<protein>
    <recommendedName>
        <fullName evidence="1">Ribose-phosphate pyrophosphokinase</fullName>
        <shortName evidence="1">RPPK</shortName>
        <ecNumber evidence="1">2.7.6.1</ecNumber>
    </recommendedName>
    <alternativeName>
        <fullName evidence="1">5-phospho-D-ribosyl alpha-1-diphosphate synthase</fullName>
    </alternativeName>
    <alternativeName>
        <fullName evidence="1">Phosphoribosyl diphosphate synthase</fullName>
    </alternativeName>
    <alternativeName>
        <fullName evidence="1">Phosphoribosyl pyrophosphate synthase</fullName>
        <shortName evidence="1">P-Rib-PP synthase</shortName>
        <shortName evidence="1">PRPP synthase</shortName>
        <shortName evidence="1">PRPPase</shortName>
    </alternativeName>
</protein>
<proteinExistence type="inferred from homology"/>
<reference key="1">
    <citation type="journal article" date="2004" name="Proc. Natl. Acad. Sci. U.S.A.">
        <title>Complete genomes of two clinical Staphylococcus aureus strains: evidence for the rapid evolution of virulence and drug resistance.</title>
        <authorList>
            <person name="Holden M.T.G."/>
            <person name="Feil E.J."/>
            <person name="Lindsay J.A."/>
            <person name="Peacock S.J."/>
            <person name="Day N.P.J."/>
            <person name="Enright M.C."/>
            <person name="Foster T.J."/>
            <person name="Moore C.E."/>
            <person name="Hurst L."/>
            <person name="Atkin R."/>
            <person name="Barron A."/>
            <person name="Bason N."/>
            <person name="Bentley S.D."/>
            <person name="Chillingworth C."/>
            <person name="Chillingworth T."/>
            <person name="Churcher C."/>
            <person name="Clark L."/>
            <person name="Corton C."/>
            <person name="Cronin A."/>
            <person name="Doggett J."/>
            <person name="Dowd L."/>
            <person name="Feltwell T."/>
            <person name="Hance Z."/>
            <person name="Harris B."/>
            <person name="Hauser H."/>
            <person name="Holroyd S."/>
            <person name="Jagels K."/>
            <person name="James K.D."/>
            <person name="Lennard N."/>
            <person name="Line A."/>
            <person name="Mayes R."/>
            <person name="Moule S."/>
            <person name="Mungall K."/>
            <person name="Ormond D."/>
            <person name="Quail M.A."/>
            <person name="Rabbinowitsch E."/>
            <person name="Rutherford K.M."/>
            <person name="Sanders M."/>
            <person name="Sharp S."/>
            <person name="Simmonds M."/>
            <person name="Stevens K."/>
            <person name="Whitehead S."/>
            <person name="Barrell B.G."/>
            <person name="Spratt B.G."/>
            <person name="Parkhill J."/>
        </authorList>
    </citation>
    <scope>NUCLEOTIDE SEQUENCE [LARGE SCALE GENOMIC DNA]</scope>
    <source>
        <strain>MSSA476</strain>
    </source>
</reference>
<keyword id="KW-0067">ATP-binding</keyword>
<keyword id="KW-0963">Cytoplasm</keyword>
<keyword id="KW-0418">Kinase</keyword>
<keyword id="KW-0460">Magnesium</keyword>
<keyword id="KW-0479">Metal-binding</keyword>
<keyword id="KW-0545">Nucleotide biosynthesis</keyword>
<keyword id="KW-0547">Nucleotide-binding</keyword>
<keyword id="KW-0808">Transferase</keyword>
<feature type="chain" id="PRO_0000141190" description="Ribose-phosphate pyrophosphokinase">
    <location>
        <begin position="1"/>
        <end position="321"/>
    </location>
</feature>
<feature type="active site" evidence="1">
    <location>
        <position position="202"/>
    </location>
</feature>
<feature type="binding site" evidence="1">
    <location>
        <begin position="44"/>
        <end position="46"/>
    </location>
    <ligand>
        <name>ATP</name>
        <dbReference type="ChEBI" id="CHEBI:30616"/>
    </ligand>
</feature>
<feature type="binding site" evidence="1">
    <location>
        <begin position="103"/>
        <end position="104"/>
    </location>
    <ligand>
        <name>ATP</name>
        <dbReference type="ChEBI" id="CHEBI:30616"/>
    </ligand>
</feature>
<feature type="binding site" evidence="1">
    <location>
        <position position="137"/>
    </location>
    <ligand>
        <name>Mg(2+)</name>
        <dbReference type="ChEBI" id="CHEBI:18420"/>
        <label>1</label>
    </ligand>
</feature>
<feature type="binding site" evidence="1">
    <location>
        <position position="179"/>
    </location>
    <ligand>
        <name>Mg(2+)</name>
        <dbReference type="ChEBI" id="CHEBI:18420"/>
        <label>2</label>
    </ligand>
</feature>
<feature type="binding site" evidence="1">
    <location>
        <position position="204"/>
    </location>
    <ligand>
        <name>D-ribose 5-phosphate</name>
        <dbReference type="ChEBI" id="CHEBI:78346"/>
    </ligand>
</feature>
<feature type="binding site" evidence="1">
    <location>
        <position position="228"/>
    </location>
    <ligand>
        <name>D-ribose 5-phosphate</name>
        <dbReference type="ChEBI" id="CHEBI:78346"/>
    </ligand>
</feature>
<feature type="binding site" evidence="1">
    <location>
        <begin position="232"/>
        <end position="236"/>
    </location>
    <ligand>
        <name>D-ribose 5-phosphate</name>
        <dbReference type="ChEBI" id="CHEBI:78346"/>
    </ligand>
</feature>
<sequence length="321" mass="35284">MLNNEYKNSSLKIFSLKGNEALAQEVADQVGIELGKCSVKRFSDGEIQINIEESIRGCDVFIIQPTSYPVNLHLMELLIMIDACKRASAATINIVVPYYGYARQDRKARSREPITAKLVANLIETAGATRMIALDLHAPQIQGFFDIPIDHLMGVPILAKHFKDDPNINPEECVVVSPDHGGVTRARKLADILKTPIAIIDKRRPRPNVAEVMNIVGEIEGRTAIIIDDIIDTAGTITLAAQALKDKGAKEVYACCTHPVLSGPAKERIENSAIKELIVTNSIHLDEDRKPSNTKELSVAGLIAQAIIRVYERESVSVLFD</sequence>
<accession>Q6GBY8</accession>
<name>KPRS_STAAS</name>
<comment type="function">
    <text evidence="1">Involved in the biosynthesis of the central metabolite phospho-alpha-D-ribosyl-1-pyrophosphate (PRPP) via the transfer of pyrophosphoryl group from ATP to 1-hydroxyl of ribose-5-phosphate (Rib-5-P).</text>
</comment>
<comment type="catalytic activity">
    <reaction evidence="1">
        <text>D-ribose 5-phosphate + ATP = 5-phospho-alpha-D-ribose 1-diphosphate + AMP + H(+)</text>
        <dbReference type="Rhea" id="RHEA:15609"/>
        <dbReference type="ChEBI" id="CHEBI:15378"/>
        <dbReference type="ChEBI" id="CHEBI:30616"/>
        <dbReference type="ChEBI" id="CHEBI:58017"/>
        <dbReference type="ChEBI" id="CHEBI:78346"/>
        <dbReference type="ChEBI" id="CHEBI:456215"/>
        <dbReference type="EC" id="2.7.6.1"/>
    </reaction>
</comment>
<comment type="cofactor">
    <cofactor evidence="1">
        <name>Mg(2+)</name>
        <dbReference type="ChEBI" id="CHEBI:18420"/>
    </cofactor>
    <text evidence="1">Binds 2 Mg(2+) ions per subunit.</text>
</comment>
<comment type="pathway">
    <text evidence="1">Metabolic intermediate biosynthesis; 5-phospho-alpha-D-ribose 1-diphosphate biosynthesis; 5-phospho-alpha-D-ribose 1-diphosphate from D-ribose 5-phosphate (route I): step 1/1.</text>
</comment>
<comment type="subunit">
    <text evidence="1">Homohexamer.</text>
</comment>
<comment type="subcellular location">
    <subcellularLocation>
        <location evidence="1">Cytoplasm</location>
    </subcellularLocation>
</comment>
<comment type="similarity">
    <text evidence="1">Belongs to the ribose-phosphate pyrophosphokinase family. Class I subfamily.</text>
</comment>
<gene>
    <name evidence="1" type="primary">prs</name>
    <name type="ordered locus">SAS0457</name>
</gene>
<evidence type="ECO:0000255" key="1">
    <source>
        <dbReference type="HAMAP-Rule" id="MF_00583"/>
    </source>
</evidence>
<dbReference type="EC" id="2.7.6.1" evidence="1"/>
<dbReference type="EMBL" id="BX571857">
    <property type="protein sequence ID" value="CAG42232.1"/>
    <property type="molecule type" value="Genomic_DNA"/>
</dbReference>
<dbReference type="RefSeq" id="WP_000933774.1">
    <property type="nucleotide sequence ID" value="NC_002953.3"/>
</dbReference>
<dbReference type="SMR" id="Q6GBY8"/>
<dbReference type="KEGG" id="sas:SAS0457"/>
<dbReference type="HOGENOM" id="CLU_033546_1_0_9"/>
<dbReference type="UniPathway" id="UPA00087">
    <property type="reaction ID" value="UER00172"/>
</dbReference>
<dbReference type="GO" id="GO:0005737">
    <property type="term" value="C:cytoplasm"/>
    <property type="evidence" value="ECO:0007669"/>
    <property type="project" value="UniProtKB-SubCell"/>
</dbReference>
<dbReference type="GO" id="GO:0002189">
    <property type="term" value="C:ribose phosphate diphosphokinase complex"/>
    <property type="evidence" value="ECO:0007669"/>
    <property type="project" value="TreeGrafter"/>
</dbReference>
<dbReference type="GO" id="GO:0005524">
    <property type="term" value="F:ATP binding"/>
    <property type="evidence" value="ECO:0007669"/>
    <property type="project" value="UniProtKB-KW"/>
</dbReference>
<dbReference type="GO" id="GO:0016301">
    <property type="term" value="F:kinase activity"/>
    <property type="evidence" value="ECO:0007669"/>
    <property type="project" value="UniProtKB-KW"/>
</dbReference>
<dbReference type="GO" id="GO:0000287">
    <property type="term" value="F:magnesium ion binding"/>
    <property type="evidence" value="ECO:0007669"/>
    <property type="project" value="UniProtKB-UniRule"/>
</dbReference>
<dbReference type="GO" id="GO:0004749">
    <property type="term" value="F:ribose phosphate diphosphokinase activity"/>
    <property type="evidence" value="ECO:0007669"/>
    <property type="project" value="UniProtKB-UniRule"/>
</dbReference>
<dbReference type="GO" id="GO:0006015">
    <property type="term" value="P:5-phosphoribose 1-diphosphate biosynthetic process"/>
    <property type="evidence" value="ECO:0007669"/>
    <property type="project" value="UniProtKB-UniRule"/>
</dbReference>
<dbReference type="GO" id="GO:0006164">
    <property type="term" value="P:purine nucleotide biosynthetic process"/>
    <property type="evidence" value="ECO:0007669"/>
    <property type="project" value="TreeGrafter"/>
</dbReference>
<dbReference type="GO" id="GO:0009156">
    <property type="term" value="P:ribonucleoside monophosphate biosynthetic process"/>
    <property type="evidence" value="ECO:0007669"/>
    <property type="project" value="InterPro"/>
</dbReference>
<dbReference type="CDD" id="cd06223">
    <property type="entry name" value="PRTases_typeI"/>
    <property type="match status" value="1"/>
</dbReference>
<dbReference type="FunFam" id="3.40.50.2020:FF:000002">
    <property type="entry name" value="Ribose-phosphate pyrophosphokinase"/>
    <property type="match status" value="1"/>
</dbReference>
<dbReference type="FunFam" id="3.40.50.2020:FF:000014">
    <property type="entry name" value="Ribose-phosphate pyrophosphokinase 1"/>
    <property type="match status" value="1"/>
</dbReference>
<dbReference type="Gene3D" id="3.40.50.2020">
    <property type="match status" value="2"/>
</dbReference>
<dbReference type="HAMAP" id="MF_00583_B">
    <property type="entry name" value="RibP_PPkinase_B"/>
    <property type="match status" value="1"/>
</dbReference>
<dbReference type="InterPro" id="IPR000842">
    <property type="entry name" value="PRib_PP_synth_CS"/>
</dbReference>
<dbReference type="InterPro" id="IPR029099">
    <property type="entry name" value="Pribosyltran_N"/>
</dbReference>
<dbReference type="InterPro" id="IPR000836">
    <property type="entry name" value="PRibTrfase_dom"/>
</dbReference>
<dbReference type="InterPro" id="IPR029057">
    <property type="entry name" value="PRTase-like"/>
</dbReference>
<dbReference type="InterPro" id="IPR005946">
    <property type="entry name" value="Rib-P_diPkinase"/>
</dbReference>
<dbReference type="InterPro" id="IPR037515">
    <property type="entry name" value="Rib-P_diPkinase_bac"/>
</dbReference>
<dbReference type="NCBIfam" id="NF002320">
    <property type="entry name" value="PRK01259.1"/>
    <property type="match status" value="1"/>
</dbReference>
<dbReference type="NCBIfam" id="NF002618">
    <property type="entry name" value="PRK02269.1"/>
    <property type="match status" value="1"/>
</dbReference>
<dbReference type="NCBIfam" id="TIGR01251">
    <property type="entry name" value="ribP_PPkin"/>
    <property type="match status" value="1"/>
</dbReference>
<dbReference type="PANTHER" id="PTHR10210">
    <property type="entry name" value="RIBOSE-PHOSPHATE DIPHOSPHOKINASE FAMILY MEMBER"/>
    <property type="match status" value="1"/>
</dbReference>
<dbReference type="PANTHER" id="PTHR10210:SF41">
    <property type="entry name" value="RIBOSE-PHOSPHATE PYROPHOSPHOKINASE 1, CHLOROPLASTIC"/>
    <property type="match status" value="1"/>
</dbReference>
<dbReference type="Pfam" id="PF14572">
    <property type="entry name" value="Pribosyl_synth"/>
    <property type="match status" value="1"/>
</dbReference>
<dbReference type="Pfam" id="PF13793">
    <property type="entry name" value="Pribosyltran_N"/>
    <property type="match status" value="1"/>
</dbReference>
<dbReference type="SMART" id="SM01400">
    <property type="entry name" value="Pribosyltran_N"/>
    <property type="match status" value="1"/>
</dbReference>
<dbReference type="SUPFAM" id="SSF53271">
    <property type="entry name" value="PRTase-like"/>
    <property type="match status" value="1"/>
</dbReference>
<dbReference type="PROSITE" id="PS00114">
    <property type="entry name" value="PRPP_SYNTHASE"/>
    <property type="match status" value="1"/>
</dbReference>
<organism>
    <name type="scientific">Staphylococcus aureus (strain MSSA476)</name>
    <dbReference type="NCBI Taxonomy" id="282459"/>
    <lineage>
        <taxon>Bacteria</taxon>
        <taxon>Bacillati</taxon>
        <taxon>Bacillota</taxon>
        <taxon>Bacilli</taxon>
        <taxon>Bacillales</taxon>
        <taxon>Staphylococcaceae</taxon>
        <taxon>Staphylococcus</taxon>
    </lineage>
</organism>